<sequence>MGGKLIVFEGVEGCGKTSQMQLCSQWLESLGVSVVVTREPGGTELGLHLRRLLLEKAEDKPVAEVTELLLYAADRSQHVEQELKPNLAAGKYILCDRYTDSTIAYQGYGRGLNMSLINQLNYIATAGLESDLTIWLDIDVEVGLTRKRGDGIALDRIEQETIAFHRRVQQGYAELAASYPSRIVRVDGSLSKEAVQQVIQEILRVHLKGLP</sequence>
<comment type="function">
    <text evidence="1">Phosphorylation of dTMP to form dTDP in both de novo and salvage pathways of dTTP synthesis.</text>
</comment>
<comment type="catalytic activity">
    <reaction evidence="1">
        <text>dTMP + ATP = dTDP + ADP</text>
        <dbReference type="Rhea" id="RHEA:13517"/>
        <dbReference type="ChEBI" id="CHEBI:30616"/>
        <dbReference type="ChEBI" id="CHEBI:58369"/>
        <dbReference type="ChEBI" id="CHEBI:63528"/>
        <dbReference type="ChEBI" id="CHEBI:456216"/>
        <dbReference type="EC" id="2.7.4.9"/>
    </reaction>
</comment>
<comment type="similarity">
    <text evidence="1">Belongs to the thymidylate kinase family.</text>
</comment>
<reference key="1">
    <citation type="journal article" date="2013" name="Plant Physiol.">
        <title>A Nostoc punctiforme Sugar Transporter Necessary to Establish a Cyanobacterium-Plant Symbiosis.</title>
        <authorList>
            <person name="Ekman M."/>
            <person name="Picossi S."/>
            <person name="Campbell E.L."/>
            <person name="Meeks J.C."/>
            <person name="Flores E."/>
        </authorList>
    </citation>
    <scope>NUCLEOTIDE SEQUENCE [LARGE SCALE GENOMIC DNA]</scope>
    <source>
        <strain>ATCC 29133 / PCC 73102</strain>
    </source>
</reference>
<protein>
    <recommendedName>
        <fullName evidence="1">Thymidylate kinase</fullName>
        <ecNumber evidence="1">2.7.4.9</ecNumber>
    </recommendedName>
    <alternativeName>
        <fullName evidence="1">dTMP kinase</fullName>
    </alternativeName>
</protein>
<gene>
    <name evidence="1" type="primary">tmk</name>
    <name type="ordered locus">Npun_F6527</name>
</gene>
<dbReference type="EC" id="2.7.4.9" evidence="1"/>
<dbReference type="EMBL" id="CP001037">
    <property type="protein sequence ID" value="ACC84789.1"/>
    <property type="molecule type" value="Genomic_DNA"/>
</dbReference>
<dbReference type="RefSeq" id="WP_012412725.1">
    <property type="nucleotide sequence ID" value="NC_010628.1"/>
</dbReference>
<dbReference type="SMR" id="B2IZE7"/>
<dbReference type="STRING" id="63737.Npun_F6527"/>
<dbReference type="EnsemblBacteria" id="ACC84789">
    <property type="protein sequence ID" value="ACC84789"/>
    <property type="gene ID" value="Npun_F6527"/>
</dbReference>
<dbReference type="KEGG" id="npu:Npun_F6527"/>
<dbReference type="eggNOG" id="COG0125">
    <property type="taxonomic scope" value="Bacteria"/>
</dbReference>
<dbReference type="HOGENOM" id="CLU_049131_0_0_3"/>
<dbReference type="OrthoDB" id="9774907at2"/>
<dbReference type="PhylomeDB" id="B2IZE7"/>
<dbReference type="Proteomes" id="UP000001191">
    <property type="component" value="Chromosome"/>
</dbReference>
<dbReference type="GO" id="GO:0005829">
    <property type="term" value="C:cytosol"/>
    <property type="evidence" value="ECO:0007669"/>
    <property type="project" value="TreeGrafter"/>
</dbReference>
<dbReference type="GO" id="GO:0005524">
    <property type="term" value="F:ATP binding"/>
    <property type="evidence" value="ECO:0007669"/>
    <property type="project" value="UniProtKB-UniRule"/>
</dbReference>
<dbReference type="GO" id="GO:0004798">
    <property type="term" value="F:dTMP kinase activity"/>
    <property type="evidence" value="ECO:0007669"/>
    <property type="project" value="UniProtKB-UniRule"/>
</dbReference>
<dbReference type="GO" id="GO:0006233">
    <property type="term" value="P:dTDP biosynthetic process"/>
    <property type="evidence" value="ECO:0007669"/>
    <property type="project" value="InterPro"/>
</dbReference>
<dbReference type="GO" id="GO:0006235">
    <property type="term" value="P:dTTP biosynthetic process"/>
    <property type="evidence" value="ECO:0007669"/>
    <property type="project" value="UniProtKB-UniRule"/>
</dbReference>
<dbReference type="GO" id="GO:0006227">
    <property type="term" value="P:dUDP biosynthetic process"/>
    <property type="evidence" value="ECO:0007669"/>
    <property type="project" value="TreeGrafter"/>
</dbReference>
<dbReference type="CDD" id="cd01672">
    <property type="entry name" value="TMPK"/>
    <property type="match status" value="1"/>
</dbReference>
<dbReference type="FunFam" id="3.40.50.300:FF:000225">
    <property type="entry name" value="Thymidylate kinase"/>
    <property type="match status" value="1"/>
</dbReference>
<dbReference type="Gene3D" id="3.40.50.300">
    <property type="entry name" value="P-loop containing nucleotide triphosphate hydrolases"/>
    <property type="match status" value="1"/>
</dbReference>
<dbReference type="HAMAP" id="MF_00165">
    <property type="entry name" value="Thymidylate_kinase"/>
    <property type="match status" value="1"/>
</dbReference>
<dbReference type="InterPro" id="IPR027417">
    <property type="entry name" value="P-loop_NTPase"/>
</dbReference>
<dbReference type="InterPro" id="IPR039430">
    <property type="entry name" value="Thymidylate_kin-like_dom"/>
</dbReference>
<dbReference type="InterPro" id="IPR018095">
    <property type="entry name" value="Thymidylate_kin_CS"/>
</dbReference>
<dbReference type="InterPro" id="IPR018094">
    <property type="entry name" value="Thymidylate_kinase"/>
</dbReference>
<dbReference type="NCBIfam" id="TIGR00041">
    <property type="entry name" value="DTMP_kinase"/>
    <property type="match status" value="1"/>
</dbReference>
<dbReference type="PANTHER" id="PTHR10344">
    <property type="entry name" value="THYMIDYLATE KINASE"/>
    <property type="match status" value="1"/>
</dbReference>
<dbReference type="PANTHER" id="PTHR10344:SF4">
    <property type="entry name" value="UMP-CMP KINASE 2, MITOCHONDRIAL"/>
    <property type="match status" value="1"/>
</dbReference>
<dbReference type="Pfam" id="PF02223">
    <property type="entry name" value="Thymidylate_kin"/>
    <property type="match status" value="1"/>
</dbReference>
<dbReference type="SUPFAM" id="SSF52540">
    <property type="entry name" value="P-loop containing nucleoside triphosphate hydrolases"/>
    <property type="match status" value="1"/>
</dbReference>
<dbReference type="PROSITE" id="PS01331">
    <property type="entry name" value="THYMIDYLATE_KINASE"/>
    <property type="match status" value="1"/>
</dbReference>
<accession>B2IZE7</accession>
<evidence type="ECO:0000255" key="1">
    <source>
        <dbReference type="HAMAP-Rule" id="MF_00165"/>
    </source>
</evidence>
<feature type="chain" id="PRO_1000097414" description="Thymidylate kinase">
    <location>
        <begin position="1"/>
        <end position="211"/>
    </location>
</feature>
<feature type="binding site" evidence="1">
    <location>
        <begin position="10"/>
        <end position="17"/>
    </location>
    <ligand>
        <name>ATP</name>
        <dbReference type="ChEBI" id="CHEBI:30616"/>
    </ligand>
</feature>
<keyword id="KW-0067">ATP-binding</keyword>
<keyword id="KW-0418">Kinase</keyword>
<keyword id="KW-0545">Nucleotide biosynthesis</keyword>
<keyword id="KW-0547">Nucleotide-binding</keyword>
<keyword id="KW-1185">Reference proteome</keyword>
<keyword id="KW-0808">Transferase</keyword>
<proteinExistence type="inferred from homology"/>
<organism>
    <name type="scientific">Nostoc punctiforme (strain ATCC 29133 / PCC 73102)</name>
    <dbReference type="NCBI Taxonomy" id="63737"/>
    <lineage>
        <taxon>Bacteria</taxon>
        <taxon>Bacillati</taxon>
        <taxon>Cyanobacteriota</taxon>
        <taxon>Cyanophyceae</taxon>
        <taxon>Nostocales</taxon>
        <taxon>Nostocaceae</taxon>
        <taxon>Nostoc</taxon>
    </lineage>
</organism>
<name>KTHY_NOSP7</name>